<reference key="1">
    <citation type="journal article" date="2009" name="PLoS Genet.">
        <title>Organised genome dynamics in the Escherichia coli species results in highly diverse adaptive paths.</title>
        <authorList>
            <person name="Touchon M."/>
            <person name="Hoede C."/>
            <person name="Tenaillon O."/>
            <person name="Barbe V."/>
            <person name="Baeriswyl S."/>
            <person name="Bidet P."/>
            <person name="Bingen E."/>
            <person name="Bonacorsi S."/>
            <person name="Bouchier C."/>
            <person name="Bouvet O."/>
            <person name="Calteau A."/>
            <person name="Chiapello H."/>
            <person name="Clermont O."/>
            <person name="Cruveiller S."/>
            <person name="Danchin A."/>
            <person name="Diard M."/>
            <person name="Dossat C."/>
            <person name="Karoui M.E."/>
            <person name="Frapy E."/>
            <person name="Garry L."/>
            <person name="Ghigo J.M."/>
            <person name="Gilles A.M."/>
            <person name="Johnson J."/>
            <person name="Le Bouguenec C."/>
            <person name="Lescat M."/>
            <person name="Mangenot S."/>
            <person name="Martinez-Jehanne V."/>
            <person name="Matic I."/>
            <person name="Nassif X."/>
            <person name="Oztas S."/>
            <person name="Petit M.A."/>
            <person name="Pichon C."/>
            <person name="Rouy Z."/>
            <person name="Ruf C.S."/>
            <person name="Schneider D."/>
            <person name="Tourret J."/>
            <person name="Vacherie B."/>
            <person name="Vallenet D."/>
            <person name="Medigue C."/>
            <person name="Rocha E.P.C."/>
            <person name="Denamur E."/>
        </authorList>
    </citation>
    <scope>NUCLEOTIDE SEQUENCE [LARGE SCALE GENOMIC DNA]</scope>
    <source>
        <strain>ED1a</strain>
    </source>
</reference>
<gene>
    <name evidence="2" type="primary">trhO</name>
    <name type="synonym">yceA</name>
    <name type="ordered locus">ECED1_1200</name>
</gene>
<organism>
    <name type="scientific">Escherichia coli O81 (strain ED1a)</name>
    <dbReference type="NCBI Taxonomy" id="585397"/>
    <lineage>
        <taxon>Bacteria</taxon>
        <taxon>Pseudomonadati</taxon>
        <taxon>Pseudomonadota</taxon>
        <taxon>Gammaproteobacteria</taxon>
        <taxon>Enterobacterales</taxon>
        <taxon>Enterobacteriaceae</taxon>
        <taxon>Escherichia</taxon>
    </lineage>
</organism>
<protein>
    <recommendedName>
        <fullName evidence="2">tRNA uridine(34) hydroxylase</fullName>
        <ecNumber evidence="2">1.14.-.-</ecNumber>
    </recommendedName>
    <alternativeName>
        <fullName evidence="2">tRNA hydroxylation protein O</fullName>
    </alternativeName>
</protein>
<feature type="chain" id="PRO_1000135471" description="tRNA uridine(34) hydroxylase">
    <location>
        <begin position="1"/>
        <end position="350"/>
    </location>
</feature>
<feature type="domain" description="Rhodanese" evidence="2">
    <location>
        <begin position="146"/>
        <end position="240"/>
    </location>
</feature>
<feature type="active site" description="Cysteine persulfide intermediate" evidence="2">
    <location>
        <position position="200"/>
    </location>
</feature>
<evidence type="ECO:0000250" key="1">
    <source>
        <dbReference type="UniProtKB" id="P24188"/>
    </source>
</evidence>
<evidence type="ECO:0000255" key="2">
    <source>
        <dbReference type="HAMAP-Rule" id="MF_00469"/>
    </source>
</evidence>
<dbReference type="EC" id="1.14.-.-" evidence="2"/>
<dbReference type="EMBL" id="CU928162">
    <property type="protein sequence ID" value="CAR07401.1"/>
    <property type="molecule type" value="Genomic_DNA"/>
</dbReference>
<dbReference type="RefSeq" id="WP_012601460.1">
    <property type="nucleotide sequence ID" value="NC_011745.1"/>
</dbReference>
<dbReference type="SMR" id="B7MTI7"/>
<dbReference type="KEGG" id="ecq:ECED1_1200"/>
<dbReference type="HOGENOM" id="CLU_038878_1_1_6"/>
<dbReference type="Proteomes" id="UP000000748">
    <property type="component" value="Chromosome"/>
</dbReference>
<dbReference type="GO" id="GO:0016705">
    <property type="term" value="F:oxidoreductase activity, acting on paired donors, with incorporation or reduction of molecular oxygen"/>
    <property type="evidence" value="ECO:0007669"/>
    <property type="project" value="UniProtKB-UniRule"/>
</dbReference>
<dbReference type="GO" id="GO:0006400">
    <property type="term" value="P:tRNA modification"/>
    <property type="evidence" value="ECO:0007669"/>
    <property type="project" value="UniProtKB-UniRule"/>
</dbReference>
<dbReference type="CDD" id="cd01518">
    <property type="entry name" value="RHOD_YceA"/>
    <property type="match status" value="1"/>
</dbReference>
<dbReference type="Gene3D" id="3.30.70.100">
    <property type="match status" value="1"/>
</dbReference>
<dbReference type="Gene3D" id="3.40.250.10">
    <property type="entry name" value="Rhodanese-like domain"/>
    <property type="match status" value="1"/>
</dbReference>
<dbReference type="HAMAP" id="MF_00469">
    <property type="entry name" value="TrhO"/>
    <property type="match status" value="1"/>
</dbReference>
<dbReference type="InterPro" id="IPR001763">
    <property type="entry name" value="Rhodanese-like_dom"/>
</dbReference>
<dbReference type="InterPro" id="IPR036873">
    <property type="entry name" value="Rhodanese-like_dom_sf"/>
</dbReference>
<dbReference type="InterPro" id="IPR022111">
    <property type="entry name" value="Rhodanese_C"/>
</dbReference>
<dbReference type="InterPro" id="IPR020936">
    <property type="entry name" value="TrhO"/>
</dbReference>
<dbReference type="InterPro" id="IPR040503">
    <property type="entry name" value="TRHO_N"/>
</dbReference>
<dbReference type="NCBIfam" id="NF001133">
    <property type="entry name" value="PRK00142.1-1"/>
    <property type="match status" value="1"/>
</dbReference>
<dbReference type="PANTHER" id="PTHR43846:SF1">
    <property type="entry name" value="TRNA URIDINE(34) HYDROXYLASE"/>
    <property type="match status" value="1"/>
</dbReference>
<dbReference type="PANTHER" id="PTHR43846">
    <property type="entry name" value="UPF0176 PROTEIN YCEA"/>
    <property type="match status" value="1"/>
</dbReference>
<dbReference type="Pfam" id="PF00581">
    <property type="entry name" value="Rhodanese"/>
    <property type="match status" value="1"/>
</dbReference>
<dbReference type="Pfam" id="PF12368">
    <property type="entry name" value="Rhodanese_C"/>
    <property type="match status" value="1"/>
</dbReference>
<dbReference type="Pfam" id="PF17773">
    <property type="entry name" value="UPF0176_N"/>
    <property type="match status" value="1"/>
</dbReference>
<dbReference type="SMART" id="SM00450">
    <property type="entry name" value="RHOD"/>
    <property type="match status" value="1"/>
</dbReference>
<dbReference type="SUPFAM" id="SSF52821">
    <property type="entry name" value="Rhodanese/Cell cycle control phosphatase"/>
    <property type="match status" value="1"/>
</dbReference>
<dbReference type="PROSITE" id="PS50206">
    <property type="entry name" value="RHODANESE_3"/>
    <property type="match status" value="1"/>
</dbReference>
<keyword id="KW-0560">Oxidoreductase</keyword>
<keyword id="KW-0819">tRNA processing</keyword>
<comment type="function">
    <text evidence="1">Catalyzes oxygen-dependent 5-hydroxyuridine (ho5U) modification at position 34 in tRNAs, the first step in 5-carboxymethoxyuridine (cmo5U) biosynthesis. May be part of an alternate pathway, which is able to bypass cmo5U biogenesis in a subset of tRNAs under aerobic conditions.</text>
</comment>
<comment type="catalytic activity">
    <reaction evidence="2">
        <text>uridine(34) in tRNA + AH2 + O2 = 5-hydroxyuridine(34) in tRNA + A + H2O</text>
        <dbReference type="Rhea" id="RHEA:64224"/>
        <dbReference type="Rhea" id="RHEA-COMP:11727"/>
        <dbReference type="Rhea" id="RHEA-COMP:13381"/>
        <dbReference type="ChEBI" id="CHEBI:13193"/>
        <dbReference type="ChEBI" id="CHEBI:15377"/>
        <dbReference type="ChEBI" id="CHEBI:15379"/>
        <dbReference type="ChEBI" id="CHEBI:17499"/>
        <dbReference type="ChEBI" id="CHEBI:65315"/>
        <dbReference type="ChEBI" id="CHEBI:136877"/>
    </reaction>
</comment>
<comment type="similarity">
    <text evidence="2">Belongs to the TrhO family.</text>
</comment>
<accession>B7MTI7</accession>
<sequence>MPVLHNRISNDALKAKMLAESEPRTTISFYKYFHIADPKVTRDALYQLFTALNVFGRVYLAHEGINAQISVPASNVETFRAQLYAFDPALEGLRLNIALDDDGKSFWVLRMKVRDRIVADGIDDPLFDASNVGEYLQAAEVNAMLDDPDALFIDMRNHYEYEVGHFENALEIPADTFREQLPKAVEMMQAHKDKKIVMYCTGGIRCEKASAWMKHNGFNKVWHIEGGIIEYARKAREQGLPVRFIGKNFVFDERMGERISDEIIAHCHQCGAPCDSHTNCKNDGCHLLFIQCPVCAEKYKGCCSEICCEESALPPEEQRRRRAGRENGNKIFNKSRGRLNTTLGIPEPTE</sequence>
<proteinExistence type="inferred from homology"/>
<name>TRHO_ECO81</name>